<feature type="chain" id="PRO_0000055814" description="RING-H2 finger protein ATL16">
    <location>
        <begin position="1"/>
        <end position="375"/>
    </location>
</feature>
<feature type="transmembrane region" description="Helical" evidence="2">
    <location>
        <begin position="39"/>
        <end position="59"/>
    </location>
</feature>
<feature type="zinc finger region" description="RING-type; atypical" evidence="3">
    <location>
        <begin position="138"/>
        <end position="180"/>
    </location>
</feature>
<feature type="region of interest" description="Disordered" evidence="4">
    <location>
        <begin position="1"/>
        <end position="20"/>
    </location>
</feature>
<feature type="region of interest" description="Disordered" evidence="4">
    <location>
        <begin position="223"/>
        <end position="266"/>
    </location>
</feature>
<feature type="region of interest" description="Disordered" evidence="4">
    <location>
        <begin position="356"/>
        <end position="375"/>
    </location>
</feature>
<feature type="compositionally biased region" description="Polar residues" evidence="4">
    <location>
        <begin position="238"/>
        <end position="257"/>
    </location>
</feature>
<dbReference type="EC" id="2.3.2.27" evidence="5"/>
<dbReference type="EMBL" id="AB025638">
    <property type="protein sequence ID" value="BAA97421.1"/>
    <property type="molecule type" value="Genomic_DNA"/>
</dbReference>
<dbReference type="EMBL" id="CP002688">
    <property type="protein sequence ID" value="AED94959.1"/>
    <property type="molecule type" value="Genomic_DNA"/>
</dbReference>
<dbReference type="EMBL" id="BT008334">
    <property type="protein sequence ID" value="AAP37693.1"/>
    <property type="molecule type" value="mRNA"/>
</dbReference>
<dbReference type="RefSeq" id="NP_199155.1">
    <property type="nucleotide sequence ID" value="NM_123708.3"/>
</dbReference>
<dbReference type="SMR" id="Q9LSW9"/>
<dbReference type="BioGRID" id="19612">
    <property type="interactions" value="19"/>
</dbReference>
<dbReference type="IntAct" id="Q9LSW9">
    <property type="interactions" value="19"/>
</dbReference>
<dbReference type="STRING" id="3702.Q9LSW9"/>
<dbReference type="PaxDb" id="3702-AT5G43420.1"/>
<dbReference type="ProteomicsDB" id="246626"/>
<dbReference type="EnsemblPlants" id="AT5G43420.1">
    <property type="protein sequence ID" value="AT5G43420.1"/>
    <property type="gene ID" value="AT5G43420"/>
</dbReference>
<dbReference type="GeneID" id="834362"/>
<dbReference type="Gramene" id="AT5G43420.1">
    <property type="protein sequence ID" value="AT5G43420.1"/>
    <property type="gene ID" value="AT5G43420"/>
</dbReference>
<dbReference type="KEGG" id="ath:AT5G43420"/>
<dbReference type="Araport" id="AT5G43420"/>
<dbReference type="TAIR" id="AT5G43420">
    <property type="gene designation" value="ATL16"/>
</dbReference>
<dbReference type="eggNOG" id="KOG0800">
    <property type="taxonomic scope" value="Eukaryota"/>
</dbReference>
<dbReference type="HOGENOM" id="CLU_040108_1_0_1"/>
<dbReference type="InParanoid" id="Q9LSW9"/>
<dbReference type="OMA" id="ERSFCEC"/>
<dbReference type="PhylomeDB" id="Q9LSW9"/>
<dbReference type="UniPathway" id="UPA00143"/>
<dbReference type="PRO" id="PR:Q9LSW9"/>
<dbReference type="Proteomes" id="UP000006548">
    <property type="component" value="Chromosome 5"/>
</dbReference>
<dbReference type="ExpressionAtlas" id="Q9LSW9">
    <property type="expression patterns" value="baseline and differential"/>
</dbReference>
<dbReference type="GO" id="GO:0016020">
    <property type="term" value="C:membrane"/>
    <property type="evidence" value="ECO:0007669"/>
    <property type="project" value="UniProtKB-SubCell"/>
</dbReference>
<dbReference type="GO" id="GO:0016740">
    <property type="term" value="F:transferase activity"/>
    <property type="evidence" value="ECO:0007669"/>
    <property type="project" value="UniProtKB-KW"/>
</dbReference>
<dbReference type="GO" id="GO:0008270">
    <property type="term" value="F:zinc ion binding"/>
    <property type="evidence" value="ECO:0007669"/>
    <property type="project" value="UniProtKB-KW"/>
</dbReference>
<dbReference type="GO" id="GO:0016567">
    <property type="term" value="P:protein ubiquitination"/>
    <property type="evidence" value="ECO:0007669"/>
    <property type="project" value="UniProtKB-UniPathway"/>
</dbReference>
<dbReference type="CDD" id="cd16461">
    <property type="entry name" value="RING-H2_EL5-like"/>
    <property type="match status" value="1"/>
</dbReference>
<dbReference type="FunFam" id="3.30.40.10:FF:000187">
    <property type="entry name" value="E3 ubiquitin-protein ligase ATL6"/>
    <property type="match status" value="1"/>
</dbReference>
<dbReference type="Gene3D" id="3.30.40.10">
    <property type="entry name" value="Zinc/RING finger domain, C3HC4 (zinc finger)"/>
    <property type="match status" value="1"/>
</dbReference>
<dbReference type="InterPro" id="IPR044600">
    <property type="entry name" value="ATL1/ATL16-like"/>
</dbReference>
<dbReference type="InterPro" id="IPR001841">
    <property type="entry name" value="Znf_RING"/>
</dbReference>
<dbReference type="InterPro" id="IPR013083">
    <property type="entry name" value="Znf_RING/FYVE/PHD"/>
</dbReference>
<dbReference type="PANTHER" id="PTHR46913">
    <property type="entry name" value="RING-H2 FINGER PROTEIN ATL16"/>
    <property type="match status" value="1"/>
</dbReference>
<dbReference type="PANTHER" id="PTHR46913:SF1">
    <property type="entry name" value="RING-H2 FINGER PROTEIN ATL16"/>
    <property type="match status" value="1"/>
</dbReference>
<dbReference type="Pfam" id="PF13639">
    <property type="entry name" value="zf-RING_2"/>
    <property type="match status" value="1"/>
</dbReference>
<dbReference type="SMART" id="SM00184">
    <property type="entry name" value="RING"/>
    <property type="match status" value="1"/>
</dbReference>
<dbReference type="SUPFAM" id="SSF57850">
    <property type="entry name" value="RING/U-box"/>
    <property type="match status" value="1"/>
</dbReference>
<dbReference type="PROSITE" id="PS50089">
    <property type="entry name" value="ZF_RING_2"/>
    <property type="match status" value="1"/>
</dbReference>
<proteinExistence type="evidence at transcript level"/>
<sequence>MDLSNRRNPLRDLSFPPPPPPPIFHRASSTGTSFPILAVAVIGILATAFLLVSYYVFVIKCCLNWHRIDILGRFSLSRRRRNDQDPLMVYSPELRSRGLDESVIRAIPIFKFKKRYDQNDGVFTGEGEEEEEKRSQECSVCLSEFQDEEKLRIIPNCSHLFHIDCIDVWLQNNANCPLCRTRVSCDTSFPPDRVSAPSTSPENLVMLRGENEYVVIELGSSIGSDRDSPRHGRLLTGQERSNSGYLLNENTQNSISPSPKKLDRGGLPRKFRKLHKMTSMGDECIDIRRGKDEQFGSIQPIRRSISMDSSADRQLYLAVQEAIRKNREVLVVGDGGGCSSSSGNVSNSKVKRSFFSFGSSRRSRSSSKLPLYFEP</sequence>
<accession>Q9LSW9</accession>
<comment type="catalytic activity">
    <reaction evidence="5">
        <text>S-ubiquitinyl-[E2 ubiquitin-conjugating enzyme]-L-cysteine + [acceptor protein]-L-lysine = [E2 ubiquitin-conjugating enzyme]-L-cysteine + N(6)-ubiquitinyl-[acceptor protein]-L-lysine.</text>
        <dbReference type="EC" id="2.3.2.27"/>
    </reaction>
</comment>
<comment type="pathway">
    <text>Protein modification; protein ubiquitination.</text>
</comment>
<comment type="subcellular location">
    <subcellularLocation>
        <location evidence="5">Membrane</location>
        <topology evidence="5">Single-pass membrane protein</topology>
    </subcellularLocation>
</comment>
<comment type="domain">
    <text evidence="1">The RING-type zinc finger domain mediates binding to an E2 ubiquitin-conjugating enzyme.</text>
</comment>
<comment type="similarity">
    <text evidence="5">Belongs to the RING-type zinc finger family. ATL subfamily.</text>
</comment>
<keyword id="KW-0472">Membrane</keyword>
<keyword id="KW-0479">Metal-binding</keyword>
<keyword id="KW-1185">Reference proteome</keyword>
<keyword id="KW-0808">Transferase</keyword>
<keyword id="KW-0812">Transmembrane</keyword>
<keyword id="KW-1133">Transmembrane helix</keyword>
<keyword id="KW-0833">Ubl conjugation pathway</keyword>
<keyword id="KW-0862">Zinc</keyword>
<keyword id="KW-0863">Zinc-finger</keyword>
<organism>
    <name type="scientific">Arabidopsis thaliana</name>
    <name type="common">Mouse-ear cress</name>
    <dbReference type="NCBI Taxonomy" id="3702"/>
    <lineage>
        <taxon>Eukaryota</taxon>
        <taxon>Viridiplantae</taxon>
        <taxon>Streptophyta</taxon>
        <taxon>Embryophyta</taxon>
        <taxon>Tracheophyta</taxon>
        <taxon>Spermatophyta</taxon>
        <taxon>Magnoliopsida</taxon>
        <taxon>eudicotyledons</taxon>
        <taxon>Gunneridae</taxon>
        <taxon>Pentapetalae</taxon>
        <taxon>rosids</taxon>
        <taxon>malvids</taxon>
        <taxon>Brassicales</taxon>
        <taxon>Brassicaceae</taxon>
        <taxon>Camelineae</taxon>
        <taxon>Arabidopsis</taxon>
    </lineage>
</organism>
<protein>
    <recommendedName>
        <fullName>RING-H2 finger protein ATL16</fullName>
        <ecNumber evidence="5">2.3.2.27</ecNumber>
    </recommendedName>
    <alternativeName>
        <fullName evidence="5">RING-type E3 ubiquitin transferase ATL16</fullName>
    </alternativeName>
</protein>
<name>ATL16_ARATH</name>
<evidence type="ECO:0000250" key="1"/>
<evidence type="ECO:0000255" key="2"/>
<evidence type="ECO:0000255" key="3">
    <source>
        <dbReference type="PROSITE-ProRule" id="PRU00175"/>
    </source>
</evidence>
<evidence type="ECO:0000256" key="4">
    <source>
        <dbReference type="SAM" id="MobiDB-lite"/>
    </source>
</evidence>
<evidence type="ECO:0000305" key="5"/>
<gene>
    <name type="primary">ATL16</name>
    <name type="ordered locus">At5g43420</name>
    <name type="ORF">MWF20.13</name>
</gene>
<reference key="1">
    <citation type="journal article" date="2000" name="DNA Res.">
        <title>Structural analysis of Arabidopsis thaliana chromosome 5. X. Sequence features of the regions of 3,076,755 bp covered by sixty P1 and TAC clones.</title>
        <authorList>
            <person name="Sato S."/>
            <person name="Nakamura Y."/>
            <person name="Kaneko T."/>
            <person name="Katoh T."/>
            <person name="Asamizu E."/>
            <person name="Kotani H."/>
            <person name="Tabata S."/>
        </authorList>
    </citation>
    <scope>NUCLEOTIDE SEQUENCE [LARGE SCALE GENOMIC DNA]</scope>
    <source>
        <strain>cv. Columbia</strain>
    </source>
</reference>
<reference key="2">
    <citation type="journal article" date="2017" name="Plant J.">
        <title>Araport11: a complete reannotation of the Arabidopsis thaliana reference genome.</title>
        <authorList>
            <person name="Cheng C.Y."/>
            <person name="Krishnakumar V."/>
            <person name="Chan A.P."/>
            <person name="Thibaud-Nissen F."/>
            <person name="Schobel S."/>
            <person name="Town C.D."/>
        </authorList>
    </citation>
    <scope>GENOME REANNOTATION</scope>
    <source>
        <strain>cv. Columbia</strain>
    </source>
</reference>
<reference key="3">
    <citation type="journal article" date="2003" name="Science">
        <title>Empirical analysis of transcriptional activity in the Arabidopsis genome.</title>
        <authorList>
            <person name="Yamada K."/>
            <person name="Lim J."/>
            <person name="Dale J.M."/>
            <person name="Chen H."/>
            <person name="Shinn P."/>
            <person name="Palm C.J."/>
            <person name="Southwick A.M."/>
            <person name="Wu H.C."/>
            <person name="Kim C.J."/>
            <person name="Nguyen M."/>
            <person name="Pham P.K."/>
            <person name="Cheuk R.F."/>
            <person name="Karlin-Newmann G."/>
            <person name="Liu S.X."/>
            <person name="Lam B."/>
            <person name="Sakano H."/>
            <person name="Wu T."/>
            <person name="Yu G."/>
            <person name="Miranda M."/>
            <person name="Quach H.L."/>
            <person name="Tripp M."/>
            <person name="Chang C.H."/>
            <person name="Lee J.M."/>
            <person name="Toriumi M.J."/>
            <person name="Chan M.M."/>
            <person name="Tang C.C."/>
            <person name="Onodera C.S."/>
            <person name="Deng J.M."/>
            <person name="Akiyama K."/>
            <person name="Ansari Y."/>
            <person name="Arakawa T."/>
            <person name="Banh J."/>
            <person name="Banno F."/>
            <person name="Bowser L."/>
            <person name="Brooks S.Y."/>
            <person name="Carninci P."/>
            <person name="Chao Q."/>
            <person name="Choy N."/>
            <person name="Enju A."/>
            <person name="Goldsmith A.D."/>
            <person name="Gurjal M."/>
            <person name="Hansen N.F."/>
            <person name="Hayashizaki Y."/>
            <person name="Johnson-Hopson C."/>
            <person name="Hsuan V.W."/>
            <person name="Iida K."/>
            <person name="Karnes M."/>
            <person name="Khan S."/>
            <person name="Koesema E."/>
            <person name="Ishida J."/>
            <person name="Jiang P.X."/>
            <person name="Jones T."/>
            <person name="Kawai J."/>
            <person name="Kamiya A."/>
            <person name="Meyers C."/>
            <person name="Nakajima M."/>
            <person name="Narusaka M."/>
            <person name="Seki M."/>
            <person name="Sakurai T."/>
            <person name="Satou M."/>
            <person name="Tamse R."/>
            <person name="Vaysberg M."/>
            <person name="Wallender E.K."/>
            <person name="Wong C."/>
            <person name="Yamamura Y."/>
            <person name="Yuan S."/>
            <person name="Shinozaki K."/>
            <person name="Davis R.W."/>
            <person name="Theologis A."/>
            <person name="Ecker J.R."/>
        </authorList>
    </citation>
    <scope>NUCLEOTIDE SEQUENCE [LARGE SCALE MRNA]</scope>
    <source>
        <strain>cv. Columbia</strain>
    </source>
</reference>
<reference key="4">
    <citation type="journal article" date="2002" name="Genome Biol.">
        <title>Evaluation and classification of RING-finger domains encoded by the Arabidopsis genome.</title>
        <authorList>
            <person name="Kosarev P."/>
            <person name="Mayer K.F.X."/>
            <person name="Hardtke C.S."/>
        </authorList>
    </citation>
    <scope>GENE FAMILY ORGANIZATION</scope>
</reference>
<reference key="5">
    <citation type="journal article" date="2004" name="Genetics">
        <title>Isolation and gene expression analysis of Arabidopsis thaliana mutants with constitutive expression of ATL2, an early elicitor-response RING-H2 zinc-finger gene.</title>
        <authorList>
            <person name="Serrano M."/>
            <person name="Guzman P."/>
        </authorList>
    </citation>
    <scope>IDENTIFICATION</scope>
</reference>
<reference key="6">
    <citation type="journal article" date="2006" name="J. Mol. Evol.">
        <title>The ATL gene family from Arabidopsis thaliana and Oryza sativa comprises a large number of putative ubiquitin ligases of the RING-H2 type.</title>
        <authorList>
            <person name="Serrano M."/>
            <person name="Parra S."/>
            <person name="Alcaraz L.D."/>
            <person name="Guzman P."/>
        </authorList>
    </citation>
    <scope>NOMENCLATURE</scope>
    <scope>GENE FAMILY ORGANIZATION</scope>
</reference>